<name>CYB_MYOGO</name>
<proteinExistence type="inferred from homology"/>
<organism>
    <name type="scientific">Myotis goudotii</name>
    <name type="common">Malagasy mouse-eared bat</name>
    <name type="synonym">Vespertilio goudotii</name>
    <dbReference type="NCBI Taxonomy" id="203698"/>
    <lineage>
        <taxon>Eukaryota</taxon>
        <taxon>Metazoa</taxon>
        <taxon>Chordata</taxon>
        <taxon>Craniata</taxon>
        <taxon>Vertebrata</taxon>
        <taxon>Euteleostomi</taxon>
        <taxon>Mammalia</taxon>
        <taxon>Eutheria</taxon>
        <taxon>Laurasiatheria</taxon>
        <taxon>Chiroptera</taxon>
        <taxon>Yangochiroptera</taxon>
        <taxon>Vespertilionidae</taxon>
        <taxon>Myotis</taxon>
    </lineage>
</organism>
<dbReference type="EMBL" id="AJ504451">
    <property type="protein sequence ID" value="CAD43209.1"/>
    <property type="molecule type" value="Genomic_DNA"/>
</dbReference>
<dbReference type="GO" id="GO:0005743">
    <property type="term" value="C:mitochondrial inner membrane"/>
    <property type="evidence" value="ECO:0007669"/>
    <property type="project" value="UniProtKB-SubCell"/>
</dbReference>
<dbReference type="GO" id="GO:0045275">
    <property type="term" value="C:respiratory chain complex III"/>
    <property type="evidence" value="ECO:0007669"/>
    <property type="project" value="InterPro"/>
</dbReference>
<dbReference type="GO" id="GO:0046872">
    <property type="term" value="F:metal ion binding"/>
    <property type="evidence" value="ECO:0007669"/>
    <property type="project" value="UniProtKB-KW"/>
</dbReference>
<dbReference type="GO" id="GO:0008121">
    <property type="term" value="F:ubiquinol-cytochrome-c reductase activity"/>
    <property type="evidence" value="ECO:0007669"/>
    <property type="project" value="InterPro"/>
</dbReference>
<dbReference type="GO" id="GO:0006122">
    <property type="term" value="P:mitochondrial electron transport, ubiquinol to cytochrome c"/>
    <property type="evidence" value="ECO:0007669"/>
    <property type="project" value="TreeGrafter"/>
</dbReference>
<dbReference type="CDD" id="cd00290">
    <property type="entry name" value="cytochrome_b_C"/>
    <property type="match status" value="1"/>
</dbReference>
<dbReference type="CDD" id="cd00284">
    <property type="entry name" value="Cytochrome_b_N"/>
    <property type="match status" value="1"/>
</dbReference>
<dbReference type="FunFam" id="1.20.810.10:FF:000002">
    <property type="entry name" value="Cytochrome b"/>
    <property type="match status" value="1"/>
</dbReference>
<dbReference type="Gene3D" id="1.20.810.10">
    <property type="entry name" value="Cytochrome Bc1 Complex, Chain C"/>
    <property type="match status" value="1"/>
</dbReference>
<dbReference type="InterPro" id="IPR005798">
    <property type="entry name" value="Cyt_b/b6_C"/>
</dbReference>
<dbReference type="InterPro" id="IPR036150">
    <property type="entry name" value="Cyt_b/b6_C_sf"/>
</dbReference>
<dbReference type="InterPro" id="IPR005797">
    <property type="entry name" value="Cyt_b/b6_N"/>
</dbReference>
<dbReference type="InterPro" id="IPR027387">
    <property type="entry name" value="Cytb/b6-like_sf"/>
</dbReference>
<dbReference type="InterPro" id="IPR030689">
    <property type="entry name" value="Cytochrome_b"/>
</dbReference>
<dbReference type="InterPro" id="IPR048260">
    <property type="entry name" value="Cytochrome_b_C_euk/bac"/>
</dbReference>
<dbReference type="InterPro" id="IPR048259">
    <property type="entry name" value="Cytochrome_b_N_euk/bac"/>
</dbReference>
<dbReference type="InterPro" id="IPR016174">
    <property type="entry name" value="Di-haem_cyt_TM"/>
</dbReference>
<dbReference type="PANTHER" id="PTHR19271">
    <property type="entry name" value="CYTOCHROME B"/>
    <property type="match status" value="1"/>
</dbReference>
<dbReference type="PANTHER" id="PTHR19271:SF16">
    <property type="entry name" value="CYTOCHROME B"/>
    <property type="match status" value="1"/>
</dbReference>
<dbReference type="Pfam" id="PF00032">
    <property type="entry name" value="Cytochrom_B_C"/>
    <property type="match status" value="1"/>
</dbReference>
<dbReference type="Pfam" id="PF00033">
    <property type="entry name" value="Cytochrome_B"/>
    <property type="match status" value="1"/>
</dbReference>
<dbReference type="PIRSF" id="PIRSF038885">
    <property type="entry name" value="COB"/>
    <property type="match status" value="1"/>
</dbReference>
<dbReference type="SUPFAM" id="SSF81648">
    <property type="entry name" value="a domain/subunit of cytochrome bc1 complex (Ubiquinol-cytochrome c reductase)"/>
    <property type="match status" value="1"/>
</dbReference>
<dbReference type="SUPFAM" id="SSF81342">
    <property type="entry name" value="Transmembrane di-heme cytochromes"/>
    <property type="match status" value="1"/>
</dbReference>
<dbReference type="PROSITE" id="PS51003">
    <property type="entry name" value="CYTB_CTER"/>
    <property type="match status" value="1"/>
</dbReference>
<dbReference type="PROSITE" id="PS51002">
    <property type="entry name" value="CYTB_NTER"/>
    <property type="match status" value="1"/>
</dbReference>
<accession>Q7YD72</accession>
<gene>
    <name type="primary">MT-CYB</name>
    <name type="synonym">COB</name>
    <name type="synonym">CYTB</name>
    <name type="synonym">MTCYB</name>
</gene>
<keyword id="KW-0249">Electron transport</keyword>
<keyword id="KW-0349">Heme</keyword>
<keyword id="KW-0408">Iron</keyword>
<keyword id="KW-0472">Membrane</keyword>
<keyword id="KW-0479">Metal-binding</keyword>
<keyword id="KW-0496">Mitochondrion</keyword>
<keyword id="KW-0999">Mitochondrion inner membrane</keyword>
<keyword id="KW-0679">Respiratory chain</keyword>
<keyword id="KW-0812">Transmembrane</keyword>
<keyword id="KW-1133">Transmembrane helix</keyword>
<keyword id="KW-0813">Transport</keyword>
<keyword id="KW-0830">Ubiquinone</keyword>
<feature type="chain" id="PRO_0000254725" description="Cytochrome b">
    <location>
        <begin position="1"/>
        <end position="379"/>
    </location>
</feature>
<feature type="transmembrane region" description="Helical" evidence="2">
    <location>
        <begin position="33"/>
        <end position="53"/>
    </location>
</feature>
<feature type="transmembrane region" description="Helical" evidence="2">
    <location>
        <begin position="77"/>
        <end position="98"/>
    </location>
</feature>
<feature type="transmembrane region" description="Helical" evidence="2">
    <location>
        <begin position="113"/>
        <end position="133"/>
    </location>
</feature>
<feature type="transmembrane region" description="Helical" evidence="2">
    <location>
        <begin position="178"/>
        <end position="198"/>
    </location>
</feature>
<feature type="transmembrane region" description="Helical" evidence="2">
    <location>
        <begin position="226"/>
        <end position="246"/>
    </location>
</feature>
<feature type="transmembrane region" description="Helical" evidence="2">
    <location>
        <begin position="288"/>
        <end position="308"/>
    </location>
</feature>
<feature type="transmembrane region" description="Helical" evidence="2">
    <location>
        <begin position="320"/>
        <end position="340"/>
    </location>
</feature>
<feature type="transmembrane region" description="Helical" evidence="2">
    <location>
        <begin position="347"/>
        <end position="367"/>
    </location>
</feature>
<feature type="binding site" description="axial binding residue" evidence="2">
    <location>
        <position position="83"/>
    </location>
    <ligand>
        <name>heme b</name>
        <dbReference type="ChEBI" id="CHEBI:60344"/>
        <label>b562</label>
    </ligand>
    <ligandPart>
        <name>Fe</name>
        <dbReference type="ChEBI" id="CHEBI:18248"/>
    </ligandPart>
</feature>
<feature type="binding site" description="axial binding residue" evidence="2">
    <location>
        <position position="97"/>
    </location>
    <ligand>
        <name>heme b</name>
        <dbReference type="ChEBI" id="CHEBI:60344"/>
        <label>b566</label>
    </ligand>
    <ligandPart>
        <name>Fe</name>
        <dbReference type="ChEBI" id="CHEBI:18248"/>
    </ligandPart>
</feature>
<feature type="binding site" description="axial binding residue" evidence="2">
    <location>
        <position position="182"/>
    </location>
    <ligand>
        <name>heme b</name>
        <dbReference type="ChEBI" id="CHEBI:60344"/>
        <label>b562</label>
    </ligand>
    <ligandPart>
        <name>Fe</name>
        <dbReference type="ChEBI" id="CHEBI:18248"/>
    </ligandPart>
</feature>
<feature type="binding site" description="axial binding residue" evidence="2">
    <location>
        <position position="196"/>
    </location>
    <ligand>
        <name>heme b</name>
        <dbReference type="ChEBI" id="CHEBI:60344"/>
        <label>b566</label>
    </ligand>
    <ligandPart>
        <name>Fe</name>
        <dbReference type="ChEBI" id="CHEBI:18248"/>
    </ligandPart>
</feature>
<feature type="binding site" evidence="2">
    <location>
        <position position="201"/>
    </location>
    <ligand>
        <name>a ubiquinone</name>
        <dbReference type="ChEBI" id="CHEBI:16389"/>
    </ligand>
</feature>
<sequence length="379" mass="42674">MTNIRKSHPLLKIINSSFIDLPAPSNISSWWNFGSLLGICLAVQILTGLFLAMHYTSDTMTAFSSVTHICRDVNYGWILRYLHANGASMFFICLYIHVGRGLYYGSYMYTETWNIGVILLFAVMATAFMGYVLPWGQMSFWGATVITNLLSAIPYIGTDLVEWIWGGFSVDKATLTRFFAFHFLLPFIISAMVMVHLLFLHETGSNNPTGIPSNMDMIPFHPYYTIKDILGLLLMIMVLLMLVLFSPDMLGDPDNYTPANPLNTPPHIKPEWYFLFAYAILRSIPNKLGGVMALVLSILILIIIPVLHTSKQRSMTFRPLSQCLFWLLVADLLXVTWIGGQPVEXPYVIXGQLASIXXXXIXIXXXXXXSXAXXXXXXW</sequence>
<comment type="function">
    <text evidence="2">Component of the ubiquinol-cytochrome c reductase complex (complex III or cytochrome b-c1 complex) that is part of the mitochondrial respiratory chain. The b-c1 complex mediates electron transfer from ubiquinol to cytochrome c. Contributes to the generation of a proton gradient across the mitochondrial membrane that is then used for ATP synthesis.</text>
</comment>
<comment type="cofactor">
    <cofactor evidence="2">
        <name>heme b</name>
        <dbReference type="ChEBI" id="CHEBI:60344"/>
    </cofactor>
    <text evidence="2">Binds 2 heme b groups non-covalently.</text>
</comment>
<comment type="subunit">
    <text evidence="2">The cytochrome bc1 complex contains 11 subunits: 3 respiratory subunits (MT-CYB, CYC1 and UQCRFS1), 2 core proteins (UQCRC1 and UQCRC2) and 6 low-molecular weight proteins (UQCRH/QCR6, UQCRB/QCR7, UQCRQ/QCR8, UQCR10/QCR9, UQCR11/QCR10 and a cleavage product of UQCRFS1). This cytochrome bc1 complex then forms a dimer.</text>
</comment>
<comment type="subcellular location">
    <subcellularLocation>
        <location evidence="2">Mitochondrion inner membrane</location>
        <topology evidence="2">Multi-pass membrane protein</topology>
    </subcellularLocation>
</comment>
<comment type="miscellaneous">
    <text evidence="1">Heme 1 (or BL or b562) is low-potential and absorbs at about 562 nm, and heme 2 (or BH or b566) is high-potential and absorbs at about 566 nm.</text>
</comment>
<comment type="similarity">
    <text evidence="3 4">Belongs to the cytochrome b family.</text>
</comment>
<comment type="caution">
    <text evidence="2">The full-length protein contains only eight transmembrane helices, not nine as predicted by bioinformatics tools.</text>
</comment>
<geneLocation type="mitochondrion"/>
<evidence type="ECO:0000250" key="1"/>
<evidence type="ECO:0000250" key="2">
    <source>
        <dbReference type="UniProtKB" id="P00157"/>
    </source>
</evidence>
<evidence type="ECO:0000255" key="3">
    <source>
        <dbReference type="PROSITE-ProRule" id="PRU00967"/>
    </source>
</evidence>
<evidence type="ECO:0000255" key="4">
    <source>
        <dbReference type="PROSITE-ProRule" id="PRU00968"/>
    </source>
</evidence>
<reference key="1">
    <citation type="journal article" date="2004" name="J. Mammal.">
        <title>Molecular systematics of the fishing bat Myotis (Pizonyx) vivesi.</title>
        <authorList>
            <person name="Stadelmann B.Y."/>
            <person name="Herrera L.G."/>
            <person name="Arroyo-Cabrales J."/>
            <person name="Flores-Martinez J.J."/>
            <person name="May B.P."/>
            <person name="Ruedi M."/>
        </authorList>
    </citation>
    <scope>NUCLEOTIDE SEQUENCE [GENOMIC DNA]</scope>
    <source>
        <tissue>Wing</tissue>
    </source>
</reference>
<protein>
    <recommendedName>
        <fullName>Cytochrome b</fullName>
    </recommendedName>
    <alternativeName>
        <fullName>Complex III subunit 3</fullName>
    </alternativeName>
    <alternativeName>
        <fullName>Complex III subunit III</fullName>
    </alternativeName>
    <alternativeName>
        <fullName>Cytochrome b-c1 complex subunit 3</fullName>
    </alternativeName>
    <alternativeName>
        <fullName>Ubiquinol-cytochrome-c reductase complex cytochrome b subunit</fullName>
    </alternativeName>
</protein>